<comment type="function">
    <text evidence="4">Catalyzes the synthesis of D-serine from L-serine. Has dehydratase activity towards both L-serine and D-serine. Displays high substrate specificity for L-serine, whereas L-alanine, L-arginine, and L-glutamine were poor substrates.</text>
</comment>
<comment type="catalytic activity">
    <reaction evidence="4">
        <text>L-serine = D-serine</text>
        <dbReference type="Rhea" id="RHEA:10980"/>
        <dbReference type="ChEBI" id="CHEBI:33384"/>
        <dbReference type="ChEBI" id="CHEBI:35247"/>
        <dbReference type="EC" id="5.1.1.18"/>
    </reaction>
    <physiologicalReaction direction="left-to-right" evidence="4">
        <dbReference type="Rhea" id="RHEA:10981"/>
    </physiologicalReaction>
    <physiologicalReaction direction="right-to-left" evidence="4">
        <dbReference type="Rhea" id="RHEA:10982"/>
    </physiologicalReaction>
</comment>
<comment type="catalytic activity">
    <reaction evidence="4">
        <text>L-serine = pyruvate + NH4(+)</text>
        <dbReference type="Rhea" id="RHEA:19169"/>
        <dbReference type="ChEBI" id="CHEBI:15361"/>
        <dbReference type="ChEBI" id="CHEBI:28938"/>
        <dbReference type="ChEBI" id="CHEBI:33384"/>
        <dbReference type="EC" id="4.3.1.17"/>
    </reaction>
    <physiologicalReaction direction="left-to-right" evidence="4">
        <dbReference type="Rhea" id="RHEA:19170"/>
    </physiologicalReaction>
</comment>
<comment type="catalytic activity">
    <reaction evidence="4">
        <text>D-serine = pyruvate + NH4(+)</text>
        <dbReference type="Rhea" id="RHEA:13977"/>
        <dbReference type="ChEBI" id="CHEBI:15361"/>
        <dbReference type="ChEBI" id="CHEBI:28938"/>
        <dbReference type="ChEBI" id="CHEBI:35247"/>
        <dbReference type="EC" id="4.3.1.18"/>
    </reaction>
    <physiologicalReaction direction="left-to-right" evidence="4">
        <dbReference type="Rhea" id="RHEA:13978"/>
    </physiologicalReaction>
</comment>
<comment type="cofactor">
    <cofactor evidence="3">
        <name>Mg(2+)</name>
        <dbReference type="ChEBI" id="CHEBI:18420"/>
    </cofactor>
    <cofactor evidence="3">
        <name>Mn(2+)</name>
        <dbReference type="ChEBI" id="CHEBI:29035"/>
    </cofactor>
    <cofactor evidence="3">
        <name>Ca(2+)</name>
        <dbReference type="ChEBI" id="CHEBI:29108"/>
    </cofactor>
</comment>
<comment type="cofactor">
    <cofactor evidence="4">
        <name>pyridoxal 5'-phosphate</name>
        <dbReference type="ChEBI" id="CHEBI:597326"/>
    </cofactor>
</comment>
<comment type="activity regulation">
    <text evidence="4">Inhibited by hydroxylamine. Racemase activity is enhanced by Ca(2+), Mg(2+), Mn(2+), and is decreased by Ni(2+), Zn(2+). Hydratase activity is enhanced by Ca(2+), Mg(2+), Mn(2+), Cu(2+), Fe(2+), Ni(2+).</text>
</comment>
<comment type="biophysicochemical properties">
    <kinetics>
        <KM evidence="4">2.5 mM for L-serine (racemase activity)</KM>
        <KM evidence="4">0.77 mM for D-serine (racemase activity)</KM>
        <KM evidence="4">20 mM for L-serine (dehydratase activity)</KM>
        <KM evidence="4">5 mM for D-serine (dehydratase activity)</KM>
        <Vmax evidence="4">5.0 nmol/min/mg enzyme toward L-serine (racemase activity)</Vmax>
        <Vmax evidence="4">1.1 nmol/min/mg enzyme toward D-serine (racemase activity)</Vmax>
        <Vmax evidence="4">250.0 nmol/min/mg enzyme toward L-serine (dehydratase activity)</Vmax>
        <Vmax evidence="4">26.0 nmol/min/mg enzyme toward L-serine (dehydratase activity)</Vmax>
    </kinetics>
    <phDependence>
        <text evidence="4">Optimum pH is 8.5 for racemization and 9.5 for dehydration.</text>
    </phDependence>
</comment>
<comment type="subunit">
    <text evidence="1">Homodimer.</text>
</comment>
<comment type="tissue specificity">
    <text evidence="4">Expressed in the whole plant.</text>
</comment>
<comment type="disruption phenotype">
    <text evidence="5">Deformations and branching of pollen tubes grown in pistils.</text>
</comment>
<comment type="similarity">
    <text evidence="7">Belongs to the serine/threonine dehydratase family.</text>
</comment>
<comment type="sequence caution" evidence="7">
    <conflict type="erroneous gene model prediction">
        <sequence resource="EMBL-CDS" id="CAB39935"/>
    </conflict>
</comment>
<comment type="sequence caution" evidence="7">
    <conflict type="erroneous gene model prediction">
        <sequence resource="EMBL-CDS" id="CAB78207"/>
    </conflict>
</comment>
<organism>
    <name type="scientific">Arabidopsis thaliana</name>
    <name type="common">Mouse-ear cress</name>
    <dbReference type="NCBI Taxonomy" id="3702"/>
    <lineage>
        <taxon>Eukaryota</taxon>
        <taxon>Viridiplantae</taxon>
        <taxon>Streptophyta</taxon>
        <taxon>Embryophyta</taxon>
        <taxon>Tracheophyta</taxon>
        <taxon>Spermatophyta</taxon>
        <taxon>Magnoliopsida</taxon>
        <taxon>eudicotyledons</taxon>
        <taxon>Gunneridae</taxon>
        <taxon>Pentapetalae</taxon>
        <taxon>rosids</taxon>
        <taxon>malvids</taxon>
        <taxon>Brassicales</taxon>
        <taxon>Brassicaceae</taxon>
        <taxon>Camelineae</taxon>
        <taxon>Arabidopsis</taxon>
    </lineage>
</organism>
<gene>
    <name type="primary">SR</name>
    <name type="synonym">SR1</name>
    <name type="ordered locus">At4g11640</name>
    <name type="ORF">T5C23.70</name>
</gene>
<name>SRR_ARATH</name>
<sequence length="331" mass="35068">MEANREKYAADILSIKEAHDRIKPYIHRTPVLTSESLNSISGRSLFFKCECLQKGGAFKFRGACNAVLSLDAEQAAKGVVTHSSGNHAAALSLAAKIQGIPAYIVVPKGAPKCKVDNVIRYGGKVIWSEATMSSREEIASKVLQETGSVLIHPYNDGRIISGQGTIALELLEQIQEIDAIVVPISGGGLISGVALAAKSIKPSIRIIAAEPKGADDAAQSKVAGKIITLPVTNTIADGLRASLGDLTWPVVRDLVDDVVTLEECEIIEAMKMCYEILKVSVEPSGAIGLAAVLSNSFRNNPSCRDCKNIGIVLSGGNVDLGSLWDSFKSSK</sequence>
<reference key="1">
    <citation type="journal article" date="2006" name="Phytochemistry">
        <title>Molecular and biochemical characterization of a serine racemase from Arabidopsis thaliana.</title>
        <authorList>
            <person name="Fujitani Y."/>
            <person name="Nakajima N."/>
            <person name="Ishihara K."/>
            <person name="Oikawa T."/>
            <person name="Ito K."/>
            <person name="Sugimoto M."/>
        </authorList>
    </citation>
    <scope>NUCLEOTIDE SEQUENCE [MRNA]</scope>
    <scope>FUNCTION</scope>
    <scope>CATALYTIC ACTIVITY</scope>
    <scope>BIOPHYSICOCHEMICAL PROPERTIES</scope>
    <scope>ACTIVITY REGULATION</scope>
    <scope>COFACTOR</scope>
    <scope>TISSUE SPECIFICITY</scope>
    <source>
        <strain>cv. Columbia</strain>
    </source>
</reference>
<reference key="2">
    <citation type="journal article" date="1999" name="Nature">
        <title>Sequence and analysis of chromosome 4 of the plant Arabidopsis thaliana.</title>
        <authorList>
            <person name="Mayer K.F.X."/>
            <person name="Schueller C."/>
            <person name="Wambutt R."/>
            <person name="Murphy G."/>
            <person name="Volckaert G."/>
            <person name="Pohl T."/>
            <person name="Duesterhoeft A."/>
            <person name="Stiekema W."/>
            <person name="Entian K.-D."/>
            <person name="Terryn N."/>
            <person name="Harris B."/>
            <person name="Ansorge W."/>
            <person name="Brandt P."/>
            <person name="Grivell L.A."/>
            <person name="Rieger M."/>
            <person name="Weichselgartner M."/>
            <person name="de Simone V."/>
            <person name="Obermaier B."/>
            <person name="Mache R."/>
            <person name="Mueller M."/>
            <person name="Kreis M."/>
            <person name="Delseny M."/>
            <person name="Puigdomenech P."/>
            <person name="Watson M."/>
            <person name="Schmidtheini T."/>
            <person name="Reichert B."/>
            <person name="Portetelle D."/>
            <person name="Perez-Alonso M."/>
            <person name="Boutry M."/>
            <person name="Bancroft I."/>
            <person name="Vos P."/>
            <person name="Hoheisel J."/>
            <person name="Zimmermann W."/>
            <person name="Wedler H."/>
            <person name="Ridley P."/>
            <person name="Langham S.-A."/>
            <person name="McCullagh B."/>
            <person name="Bilham L."/>
            <person name="Robben J."/>
            <person name="van der Schueren J."/>
            <person name="Grymonprez B."/>
            <person name="Chuang Y.-J."/>
            <person name="Vandenbussche F."/>
            <person name="Braeken M."/>
            <person name="Weltjens I."/>
            <person name="Voet M."/>
            <person name="Bastiaens I."/>
            <person name="Aert R."/>
            <person name="Defoor E."/>
            <person name="Weitzenegger T."/>
            <person name="Bothe G."/>
            <person name="Ramsperger U."/>
            <person name="Hilbert H."/>
            <person name="Braun M."/>
            <person name="Holzer E."/>
            <person name="Brandt A."/>
            <person name="Peters S."/>
            <person name="van Staveren M."/>
            <person name="Dirkse W."/>
            <person name="Mooijman P."/>
            <person name="Klein Lankhorst R."/>
            <person name="Rose M."/>
            <person name="Hauf J."/>
            <person name="Koetter P."/>
            <person name="Berneiser S."/>
            <person name="Hempel S."/>
            <person name="Feldpausch M."/>
            <person name="Lamberth S."/>
            <person name="Van den Daele H."/>
            <person name="De Keyser A."/>
            <person name="Buysshaert C."/>
            <person name="Gielen J."/>
            <person name="Villarroel R."/>
            <person name="De Clercq R."/>
            <person name="van Montagu M."/>
            <person name="Rogers J."/>
            <person name="Cronin A."/>
            <person name="Quail M.A."/>
            <person name="Bray-Allen S."/>
            <person name="Clark L."/>
            <person name="Doggett J."/>
            <person name="Hall S."/>
            <person name="Kay M."/>
            <person name="Lennard N."/>
            <person name="McLay K."/>
            <person name="Mayes R."/>
            <person name="Pettett A."/>
            <person name="Rajandream M.A."/>
            <person name="Lyne M."/>
            <person name="Benes V."/>
            <person name="Rechmann S."/>
            <person name="Borkova D."/>
            <person name="Bloecker H."/>
            <person name="Scharfe M."/>
            <person name="Grimm M."/>
            <person name="Loehnert T.-H."/>
            <person name="Dose S."/>
            <person name="de Haan M."/>
            <person name="Maarse A.C."/>
            <person name="Schaefer M."/>
            <person name="Mueller-Auer S."/>
            <person name="Gabel C."/>
            <person name="Fuchs M."/>
            <person name="Fartmann B."/>
            <person name="Granderath K."/>
            <person name="Dauner D."/>
            <person name="Herzl A."/>
            <person name="Neumann S."/>
            <person name="Argiriou A."/>
            <person name="Vitale D."/>
            <person name="Liguori R."/>
            <person name="Piravandi E."/>
            <person name="Massenet O."/>
            <person name="Quigley F."/>
            <person name="Clabauld G."/>
            <person name="Muendlein A."/>
            <person name="Felber R."/>
            <person name="Schnabl S."/>
            <person name="Hiller R."/>
            <person name="Schmidt W."/>
            <person name="Lecharny A."/>
            <person name="Aubourg S."/>
            <person name="Chefdor F."/>
            <person name="Cooke R."/>
            <person name="Berger C."/>
            <person name="Monfort A."/>
            <person name="Casacuberta E."/>
            <person name="Gibbons T."/>
            <person name="Weber N."/>
            <person name="Vandenbol M."/>
            <person name="Bargues M."/>
            <person name="Terol J."/>
            <person name="Torres A."/>
            <person name="Perez-Perez A."/>
            <person name="Purnelle B."/>
            <person name="Bent E."/>
            <person name="Johnson S."/>
            <person name="Tacon D."/>
            <person name="Jesse T."/>
            <person name="Heijnen L."/>
            <person name="Schwarz S."/>
            <person name="Scholler P."/>
            <person name="Heber S."/>
            <person name="Francs P."/>
            <person name="Bielke C."/>
            <person name="Frishman D."/>
            <person name="Haase D."/>
            <person name="Lemcke K."/>
            <person name="Mewes H.-W."/>
            <person name="Stocker S."/>
            <person name="Zaccaria P."/>
            <person name="Bevan M."/>
            <person name="Wilson R.K."/>
            <person name="de la Bastide M."/>
            <person name="Habermann K."/>
            <person name="Parnell L."/>
            <person name="Dedhia N."/>
            <person name="Gnoj L."/>
            <person name="Schutz K."/>
            <person name="Huang E."/>
            <person name="Spiegel L."/>
            <person name="Sekhon M."/>
            <person name="Murray J."/>
            <person name="Sheet P."/>
            <person name="Cordes M."/>
            <person name="Abu-Threideh J."/>
            <person name="Stoneking T."/>
            <person name="Kalicki J."/>
            <person name="Graves T."/>
            <person name="Harmon G."/>
            <person name="Edwards J."/>
            <person name="Latreille P."/>
            <person name="Courtney L."/>
            <person name="Cloud J."/>
            <person name="Abbott A."/>
            <person name="Scott K."/>
            <person name="Johnson D."/>
            <person name="Minx P."/>
            <person name="Bentley D."/>
            <person name="Fulton B."/>
            <person name="Miller N."/>
            <person name="Greco T."/>
            <person name="Kemp K."/>
            <person name="Kramer J."/>
            <person name="Fulton L."/>
            <person name="Mardis E."/>
            <person name="Dante M."/>
            <person name="Pepin K."/>
            <person name="Hillier L.W."/>
            <person name="Nelson J."/>
            <person name="Spieth J."/>
            <person name="Ryan E."/>
            <person name="Andrews S."/>
            <person name="Geisel C."/>
            <person name="Layman D."/>
            <person name="Du H."/>
            <person name="Ali J."/>
            <person name="Berghoff A."/>
            <person name="Jones K."/>
            <person name="Drone K."/>
            <person name="Cotton M."/>
            <person name="Joshu C."/>
            <person name="Antonoiu B."/>
            <person name="Zidanic M."/>
            <person name="Strong C."/>
            <person name="Sun H."/>
            <person name="Lamar B."/>
            <person name="Yordan C."/>
            <person name="Ma P."/>
            <person name="Zhong J."/>
            <person name="Preston R."/>
            <person name="Vil D."/>
            <person name="Shekher M."/>
            <person name="Matero A."/>
            <person name="Shah R."/>
            <person name="Swaby I.K."/>
            <person name="O'Shaughnessy A."/>
            <person name="Rodriguez M."/>
            <person name="Hoffman J."/>
            <person name="Till S."/>
            <person name="Granat S."/>
            <person name="Shohdy N."/>
            <person name="Hasegawa A."/>
            <person name="Hameed A."/>
            <person name="Lodhi M."/>
            <person name="Johnson A."/>
            <person name="Chen E."/>
            <person name="Marra M.A."/>
            <person name="Martienssen R."/>
            <person name="McCombie W.R."/>
        </authorList>
    </citation>
    <scope>NUCLEOTIDE SEQUENCE [LARGE SCALE GENOMIC DNA]</scope>
    <source>
        <strain>cv. Columbia</strain>
    </source>
</reference>
<reference key="3">
    <citation type="journal article" date="2017" name="Plant J.">
        <title>Araport11: a complete reannotation of the Arabidopsis thaliana reference genome.</title>
        <authorList>
            <person name="Cheng C.Y."/>
            <person name="Krishnakumar V."/>
            <person name="Chan A.P."/>
            <person name="Thibaud-Nissen F."/>
            <person name="Schobel S."/>
            <person name="Town C.D."/>
        </authorList>
    </citation>
    <scope>GENOME REANNOTATION</scope>
    <source>
        <strain>cv. Columbia</strain>
    </source>
</reference>
<reference key="4">
    <citation type="journal article" date="2011" name="Science">
        <title>Glutamate receptor-like genes form Ca2+ channels in pollen tubes and are regulated by pistil D-serine.</title>
        <authorList>
            <person name="Michard E."/>
            <person name="Lima P.T."/>
            <person name="Borges F."/>
            <person name="Silva A.C."/>
            <person name="Portes M.T."/>
            <person name="Carvalho J.E."/>
            <person name="Gilliham M."/>
            <person name="Liu L.H."/>
            <person name="Obermeyer G."/>
            <person name="Feijo J.A."/>
        </authorList>
    </citation>
    <scope>DISRUPTION PHENOTYPE</scope>
</reference>
<evidence type="ECO:0000250" key="1"/>
<evidence type="ECO:0000250" key="2">
    <source>
        <dbReference type="UniProtKB" id="O59791"/>
    </source>
</evidence>
<evidence type="ECO:0000250" key="3">
    <source>
        <dbReference type="UniProtKB" id="Q9GZT4"/>
    </source>
</evidence>
<evidence type="ECO:0000269" key="4">
    <source>
    </source>
</evidence>
<evidence type="ECO:0000269" key="5">
    <source>
    </source>
</evidence>
<evidence type="ECO:0000303" key="6">
    <source>
    </source>
</evidence>
<evidence type="ECO:0000305" key="7"/>
<accession>Q2PGG3</accession>
<accession>Q9T0D1</accession>
<protein>
    <recommendedName>
        <fullName evidence="6">Serine racemase</fullName>
        <shortName evidence="6">AtSR</shortName>
        <ecNumber evidence="4">5.1.1.18</ecNumber>
    </recommendedName>
    <alternativeName>
        <fullName>D-serine ammonia-lyase</fullName>
    </alternativeName>
    <alternativeName>
        <fullName>D-serine dehydratase</fullName>
        <ecNumber evidence="4">4.3.1.18</ecNumber>
    </alternativeName>
    <alternativeName>
        <fullName>L-serine ammonia-lyase</fullName>
    </alternativeName>
    <alternativeName>
        <fullName>L-serine dehydratase</fullName>
        <ecNumber evidence="4">4.3.1.17</ecNumber>
    </alternativeName>
</protein>
<keyword id="KW-0021">Allosteric enzyme</keyword>
<keyword id="KW-0067">ATP-binding</keyword>
<keyword id="KW-0106">Calcium</keyword>
<keyword id="KW-0413">Isomerase</keyword>
<keyword id="KW-0456">Lyase</keyword>
<keyword id="KW-0460">Magnesium</keyword>
<keyword id="KW-0464">Manganese</keyword>
<keyword id="KW-0479">Metal-binding</keyword>
<keyword id="KW-0547">Nucleotide-binding</keyword>
<keyword id="KW-0663">Pyridoxal phosphate</keyword>
<keyword id="KW-1185">Reference proteome</keyword>
<feature type="chain" id="PRO_0000420346" description="Serine racemase">
    <location>
        <begin position="1"/>
        <end position="331"/>
    </location>
</feature>
<feature type="active site" description="Proton acceptor" evidence="2">
    <location>
        <position position="59"/>
    </location>
</feature>
<feature type="active site" description="Proton acceptor" evidence="2">
    <location>
        <position position="84"/>
    </location>
</feature>
<feature type="binding site" evidence="3">
    <location>
        <position position="34"/>
    </location>
    <ligand>
        <name>ATP</name>
        <dbReference type="ChEBI" id="CHEBI:30616"/>
    </ligand>
</feature>
<feature type="binding site" evidence="3">
    <location>
        <position position="54"/>
    </location>
    <ligand>
        <name>ATP</name>
        <dbReference type="ChEBI" id="CHEBI:30616"/>
    </ligand>
</feature>
<feature type="binding site" evidence="3">
    <location>
        <position position="81"/>
    </location>
    <ligand>
        <name>Ca(2+)</name>
        <dbReference type="ChEBI" id="CHEBI:29108"/>
        <label>1</label>
    </ligand>
</feature>
<feature type="binding site" evidence="3">
    <location>
        <position position="86"/>
    </location>
    <ligand>
        <name>pyridoxal 5'-phosphate</name>
        <dbReference type="ChEBI" id="CHEBI:597326"/>
    </ligand>
</feature>
<feature type="binding site" evidence="3">
    <location>
        <position position="121"/>
    </location>
    <ligand>
        <name>ATP</name>
        <dbReference type="ChEBI" id="CHEBI:30616"/>
    </ligand>
</feature>
<feature type="binding site" evidence="3">
    <location>
        <position position="178"/>
    </location>
    <ligand>
        <name>Mg(2+)</name>
        <dbReference type="ChEBI" id="CHEBI:18420"/>
        <label>1</label>
    </ligand>
</feature>
<feature type="binding site" evidence="3">
    <location>
        <position position="186"/>
    </location>
    <ligand>
        <name>pyridoxal 5'-phosphate</name>
        <dbReference type="ChEBI" id="CHEBI:597326"/>
    </ligand>
</feature>
<feature type="binding site" evidence="3">
    <location>
        <position position="187"/>
    </location>
    <ligand>
        <name>pyridoxal 5'-phosphate</name>
        <dbReference type="ChEBI" id="CHEBI:597326"/>
    </ligand>
</feature>
<feature type="binding site" evidence="3">
    <location>
        <position position="188"/>
    </location>
    <ligand>
        <name>pyridoxal 5'-phosphate</name>
        <dbReference type="ChEBI" id="CHEBI:597326"/>
    </ligand>
</feature>
<feature type="binding site" evidence="3">
    <location>
        <position position="210"/>
    </location>
    <ligand>
        <name>Ca(2+)</name>
        <dbReference type="ChEBI" id="CHEBI:29108"/>
        <label>2</label>
    </ligand>
</feature>
<feature type="binding site" evidence="3">
    <location>
        <position position="210"/>
    </location>
    <ligand>
        <name>Mg(2+)</name>
        <dbReference type="ChEBI" id="CHEBI:18420"/>
        <label>2</label>
    </ligand>
</feature>
<feature type="binding site" evidence="3">
    <location>
        <position position="210"/>
    </location>
    <ligand>
        <name>Mn(2+)</name>
        <dbReference type="ChEBI" id="CHEBI:29035"/>
    </ligand>
</feature>
<feature type="binding site" evidence="3">
    <location>
        <position position="214"/>
    </location>
    <ligand>
        <name>Ca(2+)</name>
        <dbReference type="ChEBI" id="CHEBI:29108"/>
        <label>2</label>
    </ligand>
</feature>
<feature type="binding site" evidence="3">
    <location>
        <position position="214"/>
    </location>
    <ligand>
        <name>Mg(2+)</name>
        <dbReference type="ChEBI" id="CHEBI:18420"/>
        <label>2</label>
    </ligand>
</feature>
<feature type="binding site" evidence="3">
    <location>
        <position position="214"/>
    </location>
    <ligand>
        <name>Mn(2+)</name>
        <dbReference type="ChEBI" id="CHEBI:29035"/>
    </ligand>
</feature>
<feature type="binding site" evidence="3">
    <location>
        <position position="216"/>
    </location>
    <ligand>
        <name>Ca(2+)</name>
        <dbReference type="ChEBI" id="CHEBI:29108"/>
        <label>2</label>
    </ligand>
</feature>
<feature type="binding site" evidence="3">
    <location>
        <position position="216"/>
    </location>
    <ligand>
        <name>Mg(2+)</name>
        <dbReference type="ChEBI" id="CHEBI:18420"/>
        <label>2</label>
    </ligand>
</feature>
<feature type="binding site" evidence="3">
    <location>
        <position position="216"/>
    </location>
    <ligand>
        <name>Mn(2+)</name>
        <dbReference type="ChEBI" id="CHEBI:29035"/>
    </ligand>
</feature>
<feature type="binding site" evidence="3">
    <location>
        <position position="278"/>
    </location>
    <ligand>
        <name>ATP</name>
        <dbReference type="ChEBI" id="CHEBI:30616"/>
    </ligand>
</feature>
<feature type="binding site" evidence="3">
    <location>
        <position position="314"/>
    </location>
    <ligand>
        <name>pyridoxal 5'-phosphate</name>
        <dbReference type="ChEBI" id="CHEBI:597326"/>
    </ligand>
</feature>
<feature type="binding site" evidence="3">
    <location>
        <position position="317"/>
    </location>
    <ligand>
        <name>ATP</name>
        <dbReference type="ChEBI" id="CHEBI:30616"/>
    </ligand>
</feature>
<feature type="modified residue" description="N6-(pyridoxal phosphate)lysine" evidence="3">
    <location>
        <position position="59"/>
    </location>
</feature>
<proteinExistence type="evidence at protein level"/>
<dbReference type="EC" id="5.1.1.18" evidence="4"/>
<dbReference type="EC" id="4.3.1.18" evidence="4"/>
<dbReference type="EC" id="4.3.1.17" evidence="4"/>
<dbReference type="EMBL" id="AB206823">
    <property type="protein sequence ID" value="BAE72067.1"/>
    <property type="molecule type" value="mRNA"/>
</dbReference>
<dbReference type="EMBL" id="AL049500">
    <property type="protein sequence ID" value="CAB39935.1"/>
    <property type="status" value="ALT_SEQ"/>
    <property type="molecule type" value="Genomic_DNA"/>
</dbReference>
<dbReference type="EMBL" id="AL161532">
    <property type="protein sequence ID" value="CAB78207.1"/>
    <property type="status" value="ALT_SEQ"/>
    <property type="molecule type" value="Genomic_DNA"/>
</dbReference>
<dbReference type="EMBL" id="CP002687">
    <property type="protein sequence ID" value="AEE83032.1"/>
    <property type="molecule type" value="Genomic_DNA"/>
</dbReference>
<dbReference type="PIR" id="T04211">
    <property type="entry name" value="T04211"/>
</dbReference>
<dbReference type="RefSeq" id="NP_192901.2">
    <property type="nucleotide sequence ID" value="NM_117233.3"/>
</dbReference>
<dbReference type="SMR" id="Q2PGG3"/>
<dbReference type="FunCoup" id="Q2PGG3">
    <property type="interactions" value="1410"/>
</dbReference>
<dbReference type="STRING" id="3702.Q2PGG3"/>
<dbReference type="PaxDb" id="3702-AT4G11640.1"/>
<dbReference type="ProteomicsDB" id="226824"/>
<dbReference type="EnsemblPlants" id="AT4G11640.1">
    <property type="protein sequence ID" value="AT4G11640.1"/>
    <property type="gene ID" value="AT4G11640"/>
</dbReference>
<dbReference type="GeneID" id="826769"/>
<dbReference type="Gramene" id="AT4G11640.1">
    <property type="protein sequence ID" value="AT4G11640.1"/>
    <property type="gene ID" value="AT4G11640"/>
</dbReference>
<dbReference type="KEGG" id="ath:AT4G11640"/>
<dbReference type="Araport" id="AT4G11640"/>
<dbReference type="TAIR" id="AT4G11640">
    <property type="gene designation" value="SR"/>
</dbReference>
<dbReference type="eggNOG" id="KOG1251">
    <property type="taxonomic scope" value="Eukaryota"/>
</dbReference>
<dbReference type="HOGENOM" id="CLU_021152_4_2_1"/>
<dbReference type="InParanoid" id="Q2PGG3"/>
<dbReference type="OMA" id="LIHPFDH"/>
<dbReference type="PhylomeDB" id="Q2PGG3"/>
<dbReference type="BioCyc" id="ARA:AT4G11640-MONOMER"/>
<dbReference type="BioCyc" id="MetaCyc:MONOMER-14684"/>
<dbReference type="BRENDA" id="5.1.1.18">
    <property type="organism ID" value="399"/>
</dbReference>
<dbReference type="PRO" id="PR:Q2PGG3"/>
<dbReference type="Proteomes" id="UP000006548">
    <property type="component" value="Chromosome 4"/>
</dbReference>
<dbReference type="ExpressionAtlas" id="Q2PGG3">
    <property type="expression patterns" value="baseline and differential"/>
</dbReference>
<dbReference type="GO" id="GO:0005524">
    <property type="term" value="F:ATP binding"/>
    <property type="evidence" value="ECO:0007669"/>
    <property type="project" value="UniProtKB-KW"/>
</dbReference>
<dbReference type="GO" id="GO:0008721">
    <property type="term" value="F:D-serine ammonia-lyase activity"/>
    <property type="evidence" value="ECO:0000314"/>
    <property type="project" value="UniProtKB"/>
</dbReference>
<dbReference type="GO" id="GO:0003941">
    <property type="term" value="F:L-serine ammonia-lyase activity"/>
    <property type="evidence" value="ECO:0000314"/>
    <property type="project" value="UniProtKB"/>
</dbReference>
<dbReference type="GO" id="GO:0046872">
    <property type="term" value="F:metal ion binding"/>
    <property type="evidence" value="ECO:0007669"/>
    <property type="project" value="UniProtKB-KW"/>
</dbReference>
<dbReference type="GO" id="GO:0030170">
    <property type="term" value="F:pyridoxal phosphate binding"/>
    <property type="evidence" value="ECO:0007669"/>
    <property type="project" value="InterPro"/>
</dbReference>
<dbReference type="GO" id="GO:0030378">
    <property type="term" value="F:serine racemase activity"/>
    <property type="evidence" value="ECO:0000314"/>
    <property type="project" value="TAIR"/>
</dbReference>
<dbReference type="GO" id="GO:0070178">
    <property type="term" value="P:D-serine metabolic process"/>
    <property type="evidence" value="ECO:0000314"/>
    <property type="project" value="UniProtKB"/>
</dbReference>
<dbReference type="GO" id="GO:0006563">
    <property type="term" value="P:L-serine metabolic process"/>
    <property type="evidence" value="ECO:0000314"/>
    <property type="project" value="UniProtKB"/>
</dbReference>
<dbReference type="GO" id="GO:0009069">
    <property type="term" value="P:serine family amino acid metabolic process"/>
    <property type="evidence" value="ECO:0000314"/>
    <property type="project" value="TAIR"/>
</dbReference>
<dbReference type="CDD" id="cd01562">
    <property type="entry name" value="Thr-dehyd"/>
    <property type="match status" value="1"/>
</dbReference>
<dbReference type="FunFam" id="3.40.50.1100:FF:000007">
    <property type="entry name" value="L-threonine dehydratase catabolic TdcB"/>
    <property type="match status" value="1"/>
</dbReference>
<dbReference type="Gene3D" id="3.40.50.1100">
    <property type="match status" value="2"/>
</dbReference>
<dbReference type="InterPro" id="IPR000634">
    <property type="entry name" value="Ser/Thr_deHydtase_PyrdxlP-BS"/>
</dbReference>
<dbReference type="InterPro" id="IPR001926">
    <property type="entry name" value="TrpB-like_PALP"/>
</dbReference>
<dbReference type="InterPro" id="IPR036052">
    <property type="entry name" value="TrpB-like_PALP_sf"/>
</dbReference>
<dbReference type="PANTHER" id="PTHR43050">
    <property type="entry name" value="SERINE / THREONINE RACEMASE FAMILY MEMBER"/>
    <property type="match status" value="1"/>
</dbReference>
<dbReference type="PANTHER" id="PTHR43050:SF1">
    <property type="entry name" value="SERINE RACEMASE"/>
    <property type="match status" value="1"/>
</dbReference>
<dbReference type="Pfam" id="PF00291">
    <property type="entry name" value="PALP"/>
    <property type="match status" value="1"/>
</dbReference>
<dbReference type="SUPFAM" id="SSF53686">
    <property type="entry name" value="Tryptophan synthase beta subunit-like PLP-dependent enzymes"/>
    <property type="match status" value="1"/>
</dbReference>
<dbReference type="PROSITE" id="PS00165">
    <property type="entry name" value="DEHYDRATASE_SER_THR"/>
    <property type="match status" value="1"/>
</dbReference>